<dbReference type="EC" id="2.5.1.39" evidence="1"/>
<dbReference type="EMBL" id="AL646052">
    <property type="protein sequence ID" value="CAD16393.1"/>
    <property type="molecule type" value="Genomic_DNA"/>
</dbReference>
<dbReference type="RefSeq" id="WP_011002596.1">
    <property type="nucleotide sequence ID" value="NC_003295.1"/>
</dbReference>
<dbReference type="SMR" id="Q8XVY9"/>
<dbReference type="STRING" id="267608.RSc2686"/>
<dbReference type="EnsemblBacteria" id="CAD16393">
    <property type="protein sequence ID" value="CAD16393"/>
    <property type="gene ID" value="RSc2686"/>
</dbReference>
<dbReference type="KEGG" id="rso:RSc2686"/>
<dbReference type="eggNOG" id="COG0382">
    <property type="taxonomic scope" value="Bacteria"/>
</dbReference>
<dbReference type="HOGENOM" id="CLU_034879_1_0_4"/>
<dbReference type="UniPathway" id="UPA00232"/>
<dbReference type="Proteomes" id="UP000001436">
    <property type="component" value="Chromosome"/>
</dbReference>
<dbReference type="GO" id="GO:0005886">
    <property type="term" value="C:plasma membrane"/>
    <property type="evidence" value="ECO:0007669"/>
    <property type="project" value="UniProtKB-SubCell"/>
</dbReference>
<dbReference type="GO" id="GO:0008412">
    <property type="term" value="F:4-hydroxybenzoate polyprenyltransferase activity"/>
    <property type="evidence" value="ECO:0007669"/>
    <property type="project" value="UniProtKB-UniRule"/>
</dbReference>
<dbReference type="GO" id="GO:0006744">
    <property type="term" value="P:ubiquinone biosynthetic process"/>
    <property type="evidence" value="ECO:0007669"/>
    <property type="project" value="UniProtKB-UniRule"/>
</dbReference>
<dbReference type="CDD" id="cd13959">
    <property type="entry name" value="PT_UbiA_COQ2"/>
    <property type="match status" value="1"/>
</dbReference>
<dbReference type="FunFam" id="1.10.357.140:FF:000002">
    <property type="entry name" value="4-hydroxybenzoate octaprenyltransferase"/>
    <property type="match status" value="1"/>
</dbReference>
<dbReference type="FunFam" id="1.20.120.1780:FF:000001">
    <property type="entry name" value="4-hydroxybenzoate octaprenyltransferase"/>
    <property type="match status" value="1"/>
</dbReference>
<dbReference type="Gene3D" id="1.10.357.140">
    <property type="entry name" value="UbiA prenyltransferase"/>
    <property type="match status" value="1"/>
</dbReference>
<dbReference type="Gene3D" id="1.20.120.1780">
    <property type="entry name" value="UbiA prenyltransferase"/>
    <property type="match status" value="1"/>
</dbReference>
<dbReference type="HAMAP" id="MF_01635">
    <property type="entry name" value="UbiA"/>
    <property type="match status" value="1"/>
</dbReference>
<dbReference type="InterPro" id="IPR006370">
    <property type="entry name" value="HB_polyprenyltransferase-like"/>
</dbReference>
<dbReference type="InterPro" id="IPR039653">
    <property type="entry name" value="Prenyltransferase"/>
</dbReference>
<dbReference type="InterPro" id="IPR000537">
    <property type="entry name" value="UbiA_prenyltransferase"/>
</dbReference>
<dbReference type="InterPro" id="IPR030470">
    <property type="entry name" value="UbiA_prenylTrfase_CS"/>
</dbReference>
<dbReference type="InterPro" id="IPR044878">
    <property type="entry name" value="UbiA_sf"/>
</dbReference>
<dbReference type="NCBIfam" id="TIGR01474">
    <property type="entry name" value="ubiA_proteo"/>
    <property type="match status" value="1"/>
</dbReference>
<dbReference type="PANTHER" id="PTHR11048:SF28">
    <property type="entry name" value="4-HYDROXYBENZOATE POLYPRENYLTRANSFERASE, MITOCHONDRIAL"/>
    <property type="match status" value="1"/>
</dbReference>
<dbReference type="PANTHER" id="PTHR11048">
    <property type="entry name" value="PRENYLTRANSFERASES"/>
    <property type="match status" value="1"/>
</dbReference>
<dbReference type="Pfam" id="PF01040">
    <property type="entry name" value="UbiA"/>
    <property type="match status" value="1"/>
</dbReference>
<dbReference type="PROSITE" id="PS00943">
    <property type="entry name" value="UBIA"/>
    <property type="match status" value="1"/>
</dbReference>
<reference key="1">
    <citation type="journal article" date="2002" name="Nature">
        <title>Genome sequence of the plant pathogen Ralstonia solanacearum.</title>
        <authorList>
            <person name="Salanoubat M."/>
            <person name="Genin S."/>
            <person name="Artiguenave F."/>
            <person name="Gouzy J."/>
            <person name="Mangenot S."/>
            <person name="Arlat M."/>
            <person name="Billault A."/>
            <person name="Brottier P."/>
            <person name="Camus J.-C."/>
            <person name="Cattolico L."/>
            <person name="Chandler M."/>
            <person name="Choisne N."/>
            <person name="Claudel-Renard C."/>
            <person name="Cunnac S."/>
            <person name="Demange N."/>
            <person name="Gaspin C."/>
            <person name="Lavie M."/>
            <person name="Moisan A."/>
            <person name="Robert C."/>
            <person name="Saurin W."/>
            <person name="Schiex T."/>
            <person name="Siguier P."/>
            <person name="Thebault P."/>
            <person name="Whalen M."/>
            <person name="Wincker P."/>
            <person name="Levy M."/>
            <person name="Weissenbach J."/>
            <person name="Boucher C.A."/>
        </authorList>
    </citation>
    <scope>NUCLEOTIDE SEQUENCE [LARGE SCALE GENOMIC DNA]</scope>
    <source>
        <strain>ATCC BAA-1114 / GMI1000</strain>
    </source>
</reference>
<sequence>MQSSTAHPSRLALYARLVRIDKPIGTLLLLWPTLWAMWMAADGHPPPALVAIFVVGTVLMRSAGCAINDWADRDFDKHVKRTRERPLTAGLIAPWEALAVAAVLALVAFTLILPLNALTKWLSVAAVLIAGTYPFFKRFFAIPQAYLGIAFGFGIPMAYAAVQDQVPAPAWLMLAANVLWAIAYDTAYAMVDRDDDLLIGIQTSAITFGRFDVAAIMLCYAGFFGIMAWVGHALALGAAYWIGLAAAAALAGYYYTLLRTRDRMQCFFVFRHNNWFGACVFVGAALAYALR</sequence>
<organism>
    <name type="scientific">Ralstonia nicotianae (strain ATCC BAA-1114 / GMI1000)</name>
    <name type="common">Ralstonia solanacearum</name>
    <dbReference type="NCBI Taxonomy" id="267608"/>
    <lineage>
        <taxon>Bacteria</taxon>
        <taxon>Pseudomonadati</taxon>
        <taxon>Pseudomonadota</taxon>
        <taxon>Betaproteobacteria</taxon>
        <taxon>Burkholderiales</taxon>
        <taxon>Burkholderiaceae</taxon>
        <taxon>Ralstonia</taxon>
        <taxon>Ralstonia solanacearum species complex</taxon>
    </lineage>
</organism>
<protein>
    <recommendedName>
        <fullName evidence="1">4-hydroxybenzoate octaprenyltransferase</fullName>
        <ecNumber evidence="1">2.5.1.39</ecNumber>
    </recommendedName>
    <alternativeName>
        <fullName evidence="1">4-HB polyprenyltransferase</fullName>
    </alternativeName>
</protein>
<accession>Q8XVY9</accession>
<proteinExistence type="inferred from homology"/>
<feature type="chain" id="PRO_0000262830" description="4-hydroxybenzoate octaprenyltransferase">
    <location>
        <begin position="1"/>
        <end position="291"/>
    </location>
</feature>
<feature type="transmembrane region" description="Helical" evidence="1">
    <location>
        <begin position="23"/>
        <end position="43"/>
    </location>
</feature>
<feature type="transmembrane region" description="Helical" evidence="1">
    <location>
        <begin position="47"/>
        <end position="67"/>
    </location>
</feature>
<feature type="transmembrane region" description="Helical" evidence="1">
    <location>
        <begin position="98"/>
        <end position="118"/>
    </location>
</feature>
<feature type="transmembrane region" description="Helical" evidence="1">
    <location>
        <begin position="139"/>
        <end position="159"/>
    </location>
</feature>
<feature type="transmembrane region" description="Helical" evidence="1">
    <location>
        <begin position="171"/>
        <end position="191"/>
    </location>
</feature>
<feature type="transmembrane region" description="Helical" evidence="1">
    <location>
        <begin position="216"/>
        <end position="236"/>
    </location>
</feature>
<feature type="transmembrane region" description="Helical" evidence="1">
    <location>
        <begin position="238"/>
        <end position="258"/>
    </location>
</feature>
<feature type="transmembrane region" description="Helical" evidence="1">
    <location>
        <begin position="267"/>
        <end position="287"/>
    </location>
</feature>
<gene>
    <name evidence="1" type="primary">ubiA</name>
    <name type="ordered locus">RSc2686</name>
</gene>
<comment type="function">
    <text evidence="1">Catalyzes the prenylation of para-hydroxybenzoate (PHB) with an all-trans polyprenyl group. Mediates the second step in the final reaction sequence of ubiquinone-8 (UQ-8) biosynthesis, which is the condensation of the polyisoprenoid side chain with PHB, generating the first membrane-bound Q intermediate 3-octaprenyl-4-hydroxybenzoate.</text>
</comment>
<comment type="catalytic activity">
    <reaction evidence="1">
        <text>all-trans-octaprenyl diphosphate + 4-hydroxybenzoate = 4-hydroxy-3-(all-trans-octaprenyl)benzoate + diphosphate</text>
        <dbReference type="Rhea" id="RHEA:27782"/>
        <dbReference type="ChEBI" id="CHEBI:1617"/>
        <dbReference type="ChEBI" id="CHEBI:17879"/>
        <dbReference type="ChEBI" id="CHEBI:33019"/>
        <dbReference type="ChEBI" id="CHEBI:57711"/>
        <dbReference type="EC" id="2.5.1.39"/>
    </reaction>
</comment>
<comment type="cofactor">
    <cofactor evidence="1">
        <name>Mg(2+)</name>
        <dbReference type="ChEBI" id="CHEBI:18420"/>
    </cofactor>
</comment>
<comment type="pathway">
    <text evidence="1">Cofactor biosynthesis; ubiquinone biosynthesis.</text>
</comment>
<comment type="subcellular location">
    <subcellularLocation>
        <location evidence="1">Cell inner membrane</location>
        <topology evidence="1">Multi-pass membrane protein</topology>
    </subcellularLocation>
</comment>
<comment type="similarity">
    <text evidence="1">Belongs to the UbiA prenyltransferase family.</text>
</comment>
<evidence type="ECO:0000255" key="1">
    <source>
        <dbReference type="HAMAP-Rule" id="MF_01635"/>
    </source>
</evidence>
<keyword id="KW-0997">Cell inner membrane</keyword>
<keyword id="KW-1003">Cell membrane</keyword>
<keyword id="KW-0460">Magnesium</keyword>
<keyword id="KW-0472">Membrane</keyword>
<keyword id="KW-1185">Reference proteome</keyword>
<keyword id="KW-0808">Transferase</keyword>
<keyword id="KW-0812">Transmembrane</keyword>
<keyword id="KW-1133">Transmembrane helix</keyword>
<keyword id="KW-0831">Ubiquinone biosynthesis</keyword>
<name>UBIA_RALN1</name>